<name>ISPE_NITOC</name>
<reference key="1">
    <citation type="journal article" date="2006" name="Appl. Environ. Microbiol.">
        <title>Complete genome sequence of the marine, chemolithoautotrophic, ammonia-oxidizing bacterium Nitrosococcus oceani ATCC 19707.</title>
        <authorList>
            <person name="Klotz M.G."/>
            <person name="Arp D.J."/>
            <person name="Chain P.S.G."/>
            <person name="El-Sheikh A.F."/>
            <person name="Hauser L.J."/>
            <person name="Hommes N.G."/>
            <person name="Larimer F.W."/>
            <person name="Malfatti S.A."/>
            <person name="Norton J.M."/>
            <person name="Poret-Peterson A.T."/>
            <person name="Vergez L.M."/>
            <person name="Ward B.B."/>
        </authorList>
    </citation>
    <scope>NUCLEOTIDE SEQUENCE [LARGE SCALE GENOMIC DNA]</scope>
    <source>
        <strain>ATCC 19707 / BCRC 17464 / JCM 30415 / NCIMB 11848 / C-107</strain>
    </source>
</reference>
<proteinExistence type="inferred from homology"/>
<accession>Q3JDR0</accession>
<gene>
    <name evidence="1" type="primary">ispE</name>
    <name type="ordered locus">Noc_0513</name>
</gene>
<sequence>MLLWPAPAKLNLFLHIIGRREDGYHLLQTAFQFVDYCDWLEFRPSADGRIEHLSPLPGVPVEHDLVYRAALLLQQRTACSQGVEVRIRKHLPMGGGLGGGSSDAATTLVALNHLWETGLSISQLAQLGLELGADVPVFIYGRAAWAEGVGEQLQPLELPEPWYLIVTPAVQVSTREVFIAPELTRDCKPMTISGLLAGEGENVCEPVVRGLYPVVADALDWLSQFSPARMTGTGSSIFAAFDGKSQALAALACMPSHWQGIVAKGCNYSLLLDCLEKTGC</sequence>
<evidence type="ECO:0000255" key="1">
    <source>
        <dbReference type="HAMAP-Rule" id="MF_00061"/>
    </source>
</evidence>
<feature type="chain" id="PRO_0000235107" description="4-diphosphocytidyl-2-C-methyl-D-erythritol kinase">
    <location>
        <begin position="1"/>
        <end position="280"/>
    </location>
</feature>
<feature type="active site" evidence="1">
    <location>
        <position position="9"/>
    </location>
</feature>
<feature type="active site" evidence="1">
    <location>
        <position position="134"/>
    </location>
</feature>
<feature type="binding site" evidence="1">
    <location>
        <begin position="92"/>
        <end position="102"/>
    </location>
    <ligand>
        <name>ATP</name>
        <dbReference type="ChEBI" id="CHEBI:30616"/>
    </ligand>
</feature>
<dbReference type="EC" id="2.7.1.148" evidence="1"/>
<dbReference type="EMBL" id="CP000127">
    <property type="protein sequence ID" value="ABA57036.1"/>
    <property type="molecule type" value="Genomic_DNA"/>
</dbReference>
<dbReference type="RefSeq" id="WP_002812113.1">
    <property type="nucleotide sequence ID" value="NC_007484.1"/>
</dbReference>
<dbReference type="SMR" id="Q3JDR0"/>
<dbReference type="FunCoup" id="Q3JDR0">
    <property type="interactions" value="290"/>
</dbReference>
<dbReference type="STRING" id="323261.Noc_0513"/>
<dbReference type="KEGG" id="noc:Noc_0513"/>
<dbReference type="eggNOG" id="COG1947">
    <property type="taxonomic scope" value="Bacteria"/>
</dbReference>
<dbReference type="HOGENOM" id="CLU_053057_3_0_6"/>
<dbReference type="InParanoid" id="Q3JDR0"/>
<dbReference type="UniPathway" id="UPA00056">
    <property type="reaction ID" value="UER00094"/>
</dbReference>
<dbReference type="Proteomes" id="UP000006838">
    <property type="component" value="Chromosome"/>
</dbReference>
<dbReference type="GO" id="GO:0050515">
    <property type="term" value="F:4-(cytidine 5'-diphospho)-2-C-methyl-D-erythritol kinase activity"/>
    <property type="evidence" value="ECO:0007669"/>
    <property type="project" value="UniProtKB-UniRule"/>
</dbReference>
<dbReference type="GO" id="GO:0005524">
    <property type="term" value="F:ATP binding"/>
    <property type="evidence" value="ECO:0007669"/>
    <property type="project" value="UniProtKB-UniRule"/>
</dbReference>
<dbReference type="GO" id="GO:0019288">
    <property type="term" value="P:isopentenyl diphosphate biosynthetic process, methylerythritol 4-phosphate pathway"/>
    <property type="evidence" value="ECO:0007669"/>
    <property type="project" value="UniProtKB-UniRule"/>
</dbReference>
<dbReference type="GO" id="GO:0016114">
    <property type="term" value="P:terpenoid biosynthetic process"/>
    <property type="evidence" value="ECO:0007669"/>
    <property type="project" value="InterPro"/>
</dbReference>
<dbReference type="Gene3D" id="3.30.230.10">
    <property type="match status" value="1"/>
</dbReference>
<dbReference type="Gene3D" id="3.30.70.890">
    <property type="entry name" value="GHMP kinase, C-terminal domain"/>
    <property type="match status" value="1"/>
</dbReference>
<dbReference type="HAMAP" id="MF_00061">
    <property type="entry name" value="IspE"/>
    <property type="match status" value="1"/>
</dbReference>
<dbReference type="InterPro" id="IPR013750">
    <property type="entry name" value="GHMP_kinase_C_dom"/>
</dbReference>
<dbReference type="InterPro" id="IPR036554">
    <property type="entry name" value="GHMP_kinase_C_sf"/>
</dbReference>
<dbReference type="InterPro" id="IPR006204">
    <property type="entry name" value="GHMP_kinase_N_dom"/>
</dbReference>
<dbReference type="InterPro" id="IPR004424">
    <property type="entry name" value="IspE"/>
</dbReference>
<dbReference type="InterPro" id="IPR020568">
    <property type="entry name" value="Ribosomal_Su5_D2-typ_SF"/>
</dbReference>
<dbReference type="InterPro" id="IPR014721">
    <property type="entry name" value="Ribsml_uS5_D2-typ_fold_subgr"/>
</dbReference>
<dbReference type="NCBIfam" id="TIGR00154">
    <property type="entry name" value="ispE"/>
    <property type="match status" value="1"/>
</dbReference>
<dbReference type="PANTHER" id="PTHR43527">
    <property type="entry name" value="4-DIPHOSPHOCYTIDYL-2-C-METHYL-D-ERYTHRITOL KINASE, CHLOROPLASTIC"/>
    <property type="match status" value="1"/>
</dbReference>
<dbReference type="PANTHER" id="PTHR43527:SF2">
    <property type="entry name" value="4-DIPHOSPHOCYTIDYL-2-C-METHYL-D-ERYTHRITOL KINASE, CHLOROPLASTIC"/>
    <property type="match status" value="1"/>
</dbReference>
<dbReference type="Pfam" id="PF08544">
    <property type="entry name" value="GHMP_kinases_C"/>
    <property type="match status" value="1"/>
</dbReference>
<dbReference type="Pfam" id="PF00288">
    <property type="entry name" value="GHMP_kinases_N"/>
    <property type="match status" value="1"/>
</dbReference>
<dbReference type="PIRSF" id="PIRSF010376">
    <property type="entry name" value="IspE"/>
    <property type="match status" value="1"/>
</dbReference>
<dbReference type="SUPFAM" id="SSF55060">
    <property type="entry name" value="GHMP Kinase, C-terminal domain"/>
    <property type="match status" value="1"/>
</dbReference>
<dbReference type="SUPFAM" id="SSF54211">
    <property type="entry name" value="Ribosomal protein S5 domain 2-like"/>
    <property type="match status" value="1"/>
</dbReference>
<keyword id="KW-0067">ATP-binding</keyword>
<keyword id="KW-0414">Isoprene biosynthesis</keyword>
<keyword id="KW-0418">Kinase</keyword>
<keyword id="KW-0547">Nucleotide-binding</keyword>
<keyword id="KW-1185">Reference proteome</keyword>
<keyword id="KW-0808">Transferase</keyword>
<protein>
    <recommendedName>
        <fullName evidence="1">4-diphosphocytidyl-2-C-methyl-D-erythritol kinase</fullName>
        <shortName evidence="1">CMK</shortName>
        <ecNumber evidence="1">2.7.1.148</ecNumber>
    </recommendedName>
    <alternativeName>
        <fullName evidence="1">4-(cytidine-5'-diphospho)-2-C-methyl-D-erythritol kinase</fullName>
    </alternativeName>
</protein>
<organism>
    <name type="scientific">Nitrosococcus oceani (strain ATCC 19707 / BCRC 17464 / JCM 30415 / NCIMB 11848 / C-107)</name>
    <dbReference type="NCBI Taxonomy" id="323261"/>
    <lineage>
        <taxon>Bacteria</taxon>
        <taxon>Pseudomonadati</taxon>
        <taxon>Pseudomonadota</taxon>
        <taxon>Gammaproteobacteria</taxon>
        <taxon>Chromatiales</taxon>
        <taxon>Chromatiaceae</taxon>
        <taxon>Nitrosococcus</taxon>
    </lineage>
</organism>
<comment type="function">
    <text evidence="1">Catalyzes the phosphorylation of the position 2 hydroxy group of 4-diphosphocytidyl-2C-methyl-D-erythritol.</text>
</comment>
<comment type="catalytic activity">
    <reaction evidence="1">
        <text>4-CDP-2-C-methyl-D-erythritol + ATP = 4-CDP-2-C-methyl-D-erythritol 2-phosphate + ADP + H(+)</text>
        <dbReference type="Rhea" id="RHEA:18437"/>
        <dbReference type="ChEBI" id="CHEBI:15378"/>
        <dbReference type="ChEBI" id="CHEBI:30616"/>
        <dbReference type="ChEBI" id="CHEBI:57823"/>
        <dbReference type="ChEBI" id="CHEBI:57919"/>
        <dbReference type="ChEBI" id="CHEBI:456216"/>
        <dbReference type="EC" id="2.7.1.148"/>
    </reaction>
</comment>
<comment type="pathway">
    <text evidence="1">Isoprenoid biosynthesis; isopentenyl diphosphate biosynthesis via DXP pathway; isopentenyl diphosphate from 1-deoxy-D-xylulose 5-phosphate: step 3/6.</text>
</comment>
<comment type="similarity">
    <text evidence="1">Belongs to the GHMP kinase family. IspE subfamily.</text>
</comment>